<comment type="function">
    <text evidence="1">Catalyzes the transfer of a methyl group from 5-methyltetrahydrofolate to homocysteine resulting in methionine formation.</text>
</comment>
<comment type="catalytic activity">
    <reaction evidence="1">
        <text>5-methyltetrahydropteroyltri-L-glutamate + L-homocysteine = tetrahydropteroyltri-L-glutamate + L-methionine</text>
        <dbReference type="Rhea" id="RHEA:21196"/>
        <dbReference type="ChEBI" id="CHEBI:57844"/>
        <dbReference type="ChEBI" id="CHEBI:58140"/>
        <dbReference type="ChEBI" id="CHEBI:58199"/>
        <dbReference type="ChEBI" id="CHEBI:58207"/>
        <dbReference type="EC" id="2.1.1.14"/>
    </reaction>
</comment>
<comment type="cofactor">
    <cofactor evidence="1">
        <name>Zn(2+)</name>
        <dbReference type="ChEBI" id="CHEBI:29105"/>
    </cofactor>
    <text evidence="1">Binds 1 zinc ion per subunit.</text>
</comment>
<comment type="pathway">
    <text evidence="1">Amino-acid biosynthesis; L-methionine biosynthesis via de novo pathway; L-methionine from L-homocysteine (MetE route): step 1/1.</text>
</comment>
<comment type="similarity">
    <text evidence="1">Belongs to the vitamin-B12 independent methionine synthase family.</text>
</comment>
<comment type="sequence caution" evidence="2">
    <conflict type="erroneous initiation">
        <sequence resource="EMBL-CDS" id="AAG61038"/>
    </conflict>
    <text>Extended N-terminus.</text>
</comment>
<name>METE_BRADU</name>
<accession>Q9AMV8</accession>
<accession>Q89TE1</accession>
<proteinExistence type="inferred from homology"/>
<dbReference type="EC" id="2.1.1.14" evidence="1"/>
<dbReference type="EMBL" id="AH010242">
    <property type="protein sequence ID" value="AAG61038.1"/>
    <property type="status" value="ALT_INIT"/>
    <property type="molecule type" value="Genomic_DNA"/>
</dbReference>
<dbReference type="EMBL" id="BA000040">
    <property type="protein sequence ID" value="BAC47333.1"/>
    <property type="molecule type" value="Genomic_DNA"/>
</dbReference>
<dbReference type="RefSeq" id="NP_768708.1">
    <property type="nucleotide sequence ID" value="NC_004463.1"/>
</dbReference>
<dbReference type="RefSeq" id="WP_011084864.1">
    <property type="nucleotide sequence ID" value="NZ_CP011360.1"/>
</dbReference>
<dbReference type="SMR" id="Q9AMV8"/>
<dbReference type="FunCoup" id="Q9AMV8">
    <property type="interactions" value="441"/>
</dbReference>
<dbReference type="STRING" id="224911.AAV28_07165"/>
<dbReference type="EnsemblBacteria" id="BAC47333">
    <property type="protein sequence ID" value="BAC47333"/>
    <property type="gene ID" value="BAC47333"/>
</dbReference>
<dbReference type="GeneID" id="64067290"/>
<dbReference type="KEGG" id="bja:blr2068"/>
<dbReference type="PATRIC" id="fig|224911.44.peg.1573"/>
<dbReference type="eggNOG" id="COG0620">
    <property type="taxonomic scope" value="Bacteria"/>
</dbReference>
<dbReference type="HOGENOM" id="CLU_013175_0_0_5"/>
<dbReference type="InParanoid" id="Q9AMV8"/>
<dbReference type="OrthoDB" id="244285at2"/>
<dbReference type="PhylomeDB" id="Q9AMV8"/>
<dbReference type="UniPathway" id="UPA00051">
    <property type="reaction ID" value="UER00082"/>
</dbReference>
<dbReference type="Proteomes" id="UP000002526">
    <property type="component" value="Chromosome"/>
</dbReference>
<dbReference type="GO" id="GO:0003871">
    <property type="term" value="F:5-methyltetrahydropteroyltriglutamate-homocysteine S-methyltransferase activity"/>
    <property type="evidence" value="ECO:0007669"/>
    <property type="project" value="UniProtKB-UniRule"/>
</dbReference>
<dbReference type="GO" id="GO:0008270">
    <property type="term" value="F:zinc ion binding"/>
    <property type="evidence" value="ECO:0007669"/>
    <property type="project" value="InterPro"/>
</dbReference>
<dbReference type="GO" id="GO:0009086">
    <property type="term" value="P:methionine biosynthetic process"/>
    <property type="evidence" value="ECO:0007669"/>
    <property type="project" value="UniProtKB-UniRule"/>
</dbReference>
<dbReference type="GO" id="GO:0032259">
    <property type="term" value="P:methylation"/>
    <property type="evidence" value="ECO:0007669"/>
    <property type="project" value="UniProtKB-KW"/>
</dbReference>
<dbReference type="CDD" id="cd03311">
    <property type="entry name" value="CIMS_C_terminal_like"/>
    <property type="match status" value="1"/>
</dbReference>
<dbReference type="CDD" id="cd03312">
    <property type="entry name" value="CIMS_N_terminal_like"/>
    <property type="match status" value="1"/>
</dbReference>
<dbReference type="FunFam" id="3.20.20.210:FF:000002">
    <property type="entry name" value="5-methyltetrahydropteroyltriglutamate--homocysteine methyltransferase"/>
    <property type="match status" value="1"/>
</dbReference>
<dbReference type="FunFam" id="3.20.20.210:FF:000003">
    <property type="entry name" value="5-methyltetrahydropteroyltriglutamate--homocysteine methyltransferase"/>
    <property type="match status" value="1"/>
</dbReference>
<dbReference type="Gene3D" id="3.20.20.210">
    <property type="match status" value="2"/>
</dbReference>
<dbReference type="HAMAP" id="MF_00172">
    <property type="entry name" value="Meth_synth"/>
    <property type="match status" value="1"/>
</dbReference>
<dbReference type="InterPro" id="IPR013215">
    <property type="entry name" value="Cbl-indep_Met_Synth_N"/>
</dbReference>
<dbReference type="InterPro" id="IPR006276">
    <property type="entry name" value="Cobalamin-indep_Met_synthase"/>
</dbReference>
<dbReference type="InterPro" id="IPR002629">
    <property type="entry name" value="Met_Synth_C/arc"/>
</dbReference>
<dbReference type="InterPro" id="IPR038071">
    <property type="entry name" value="UROD/MetE-like_sf"/>
</dbReference>
<dbReference type="NCBIfam" id="TIGR01371">
    <property type="entry name" value="met_syn_B12ind"/>
    <property type="match status" value="1"/>
</dbReference>
<dbReference type="NCBIfam" id="NF003556">
    <property type="entry name" value="PRK05222.1"/>
    <property type="match status" value="1"/>
</dbReference>
<dbReference type="PANTHER" id="PTHR30519">
    <property type="entry name" value="5-METHYLTETRAHYDROPTEROYLTRIGLUTAMATE--HOMOCYSTEINE METHYLTRANSFERASE"/>
    <property type="match status" value="1"/>
</dbReference>
<dbReference type="Pfam" id="PF08267">
    <property type="entry name" value="Meth_synt_1"/>
    <property type="match status" value="1"/>
</dbReference>
<dbReference type="Pfam" id="PF01717">
    <property type="entry name" value="Meth_synt_2"/>
    <property type="match status" value="1"/>
</dbReference>
<dbReference type="PIRSF" id="PIRSF000382">
    <property type="entry name" value="MeTrfase_B12_ind"/>
    <property type="match status" value="1"/>
</dbReference>
<dbReference type="SUPFAM" id="SSF51726">
    <property type="entry name" value="UROD/MetE-like"/>
    <property type="match status" value="2"/>
</dbReference>
<protein>
    <recommendedName>
        <fullName evidence="1">5-methyltetrahydropteroyltriglutamate--homocysteine methyltransferase</fullName>
        <ecNumber evidence="1">2.1.1.14</ecNumber>
    </recommendedName>
    <alternativeName>
        <fullName evidence="1">Cobalamin-independent methionine synthase</fullName>
    </alternativeName>
    <alternativeName>
        <fullName evidence="1">Methionine synthase, vitamin-B12 independent isozyme</fullName>
    </alternativeName>
</protein>
<sequence>MSPLSLPVATLGTPRIGPRRELKLALESYWAGKISEQQLHEDAFGLRAANWARQKSLGVTIIPSNDFSLYDQVLDTSVMVGAIPEIYAANGESVSLQTYFAMARGSQCGEQDASCAQSPRGSGVPAQEMTKWFDTNYHYMVPEFYRGQAFRLCSRKPVEEYEEARALGFQTRPVLIGPVTFLKLGKSTDSAFQPLSLLDDLIPVYIDLLHELAKRGASWVQFDEPCLVLDLDEAARNSLLHAYNRFAKEGPAIKIMLASYFGALGDNLDTALSLPISGLHVDLVRAPELLDQIVADGRSDLVMSLGVIDGRNVWRSNLPSLRQRLKPSIAKLGRHRVQLAPSCSLLHVPVDVELETGLASDVKSWLAFSVQKMRELAILARVLAGDQNVGLALAESECAATARRTSPKIHNANVAVRMRAIDQTMRQRATPFARRSEIQRERFGLPAFPTTTIGSFPQTTAVRNARAAHARGAMSEEQYDRFLKEEIARAVRWQEDIGLDVLVHGEFERNDMVQYFSEQLAGFAFTRNGWVQSYGSRCVRPPILFGDVVRPKPITVEWWRYAQSLTSKPMKAMLTGPVTILNWSFVRDDIPRSEVCRQLALAMRDEVRDLENAGAAMIQIDEAALREGLPLRRSDWKAYLDWAGDCFRICSSGVTDQTQIHTHMCYSEFNDIIGAIAAMDADVISIETSRSKMELLDAFRRYEYPNQIGPGVYDIHSPRVPETDEMKELIVLARTRLQDSQLWVNPDCGLKTRKWEEVRPALANMVAAARELRAASDPQIR</sequence>
<evidence type="ECO:0000255" key="1">
    <source>
        <dbReference type="HAMAP-Rule" id="MF_00172"/>
    </source>
</evidence>
<evidence type="ECO:0000305" key="2"/>
<keyword id="KW-0028">Amino-acid biosynthesis</keyword>
<keyword id="KW-0479">Metal-binding</keyword>
<keyword id="KW-0486">Methionine biosynthesis</keyword>
<keyword id="KW-0489">Methyltransferase</keyword>
<keyword id="KW-1185">Reference proteome</keyword>
<keyword id="KW-0677">Repeat</keyword>
<keyword id="KW-0808">Transferase</keyword>
<keyword id="KW-0862">Zinc</keyword>
<reference key="1">
    <citation type="journal article" date="2001" name="J. Bacteriol.">
        <title>Potential symbiosis-specific genes uncovered by sequencing a 410-kb DNA region of the Bradyrhizobium japonicum chromosome.</title>
        <authorList>
            <person name="Goettfert M."/>
            <person name="Roethlisberger S."/>
            <person name="Kuendig C."/>
            <person name="Beck C."/>
            <person name="Marty R."/>
            <person name="Hennecke H."/>
        </authorList>
    </citation>
    <scope>NUCLEOTIDE SEQUENCE [GENOMIC DNA]</scope>
    <source>
        <strain>USDA 110spc4</strain>
    </source>
</reference>
<reference key="2">
    <citation type="journal article" date="2002" name="DNA Res.">
        <title>Complete genomic sequence of nitrogen-fixing symbiotic bacterium Bradyrhizobium japonicum USDA110.</title>
        <authorList>
            <person name="Kaneko T."/>
            <person name="Nakamura Y."/>
            <person name="Sato S."/>
            <person name="Minamisawa K."/>
            <person name="Uchiumi T."/>
            <person name="Sasamoto S."/>
            <person name="Watanabe A."/>
            <person name="Idesawa K."/>
            <person name="Iriguchi M."/>
            <person name="Kawashima K."/>
            <person name="Kohara M."/>
            <person name="Matsumoto M."/>
            <person name="Shimpo S."/>
            <person name="Tsuruoka H."/>
            <person name="Wada T."/>
            <person name="Yamada M."/>
            <person name="Tabata S."/>
        </authorList>
    </citation>
    <scope>NUCLEOTIDE SEQUENCE [LARGE SCALE GENOMIC DNA]</scope>
    <source>
        <strain>JCM 10833 / BCRC 13528 / IAM 13628 / NBRC 14792 / USDA 110</strain>
    </source>
</reference>
<organism>
    <name type="scientific">Bradyrhizobium diazoefficiens (strain JCM 10833 / BCRC 13528 / IAM 13628 / NBRC 14792 / USDA 110)</name>
    <dbReference type="NCBI Taxonomy" id="224911"/>
    <lineage>
        <taxon>Bacteria</taxon>
        <taxon>Pseudomonadati</taxon>
        <taxon>Pseudomonadota</taxon>
        <taxon>Alphaproteobacteria</taxon>
        <taxon>Hyphomicrobiales</taxon>
        <taxon>Nitrobacteraceae</taxon>
        <taxon>Bradyrhizobium</taxon>
    </lineage>
</organism>
<gene>
    <name evidence="1" type="primary">metE</name>
    <name type="ordered locus">blr2068</name>
    <name type="ORF">id830</name>
</gene>
<feature type="chain" id="PRO_0000098618" description="5-methyltetrahydropteroyltriglutamate--homocysteine methyltransferase">
    <location>
        <begin position="1"/>
        <end position="781"/>
    </location>
</feature>
<feature type="active site" description="Proton donor" evidence="1">
    <location>
        <position position="716"/>
    </location>
</feature>
<feature type="binding site" evidence="1">
    <location>
        <begin position="20"/>
        <end position="23"/>
    </location>
    <ligand>
        <name>5-methyltetrahydropteroyltri-L-glutamate</name>
        <dbReference type="ChEBI" id="CHEBI:58207"/>
    </ligand>
</feature>
<feature type="binding site" evidence="1">
    <location>
        <position position="131"/>
    </location>
    <ligand>
        <name>5-methyltetrahydropteroyltri-L-glutamate</name>
        <dbReference type="ChEBI" id="CHEBI:58207"/>
    </ligand>
</feature>
<feature type="binding site" evidence="1">
    <location>
        <begin position="453"/>
        <end position="455"/>
    </location>
    <ligand>
        <name>L-homocysteine</name>
        <dbReference type="ChEBI" id="CHEBI:58199"/>
    </ligand>
</feature>
<feature type="binding site" evidence="1">
    <location>
        <begin position="453"/>
        <end position="455"/>
    </location>
    <ligand>
        <name>L-methionine</name>
        <dbReference type="ChEBI" id="CHEBI:57844"/>
    </ligand>
</feature>
<feature type="binding site" evidence="1">
    <location>
        <position position="506"/>
    </location>
    <ligand>
        <name>L-homocysteine</name>
        <dbReference type="ChEBI" id="CHEBI:58199"/>
    </ligand>
</feature>
<feature type="binding site" evidence="1">
    <location>
        <position position="506"/>
    </location>
    <ligand>
        <name>L-methionine</name>
        <dbReference type="ChEBI" id="CHEBI:57844"/>
    </ligand>
</feature>
<feature type="binding site" evidence="1">
    <location>
        <begin position="537"/>
        <end position="538"/>
    </location>
    <ligand>
        <name>5-methyltetrahydropteroyltri-L-glutamate</name>
        <dbReference type="ChEBI" id="CHEBI:58207"/>
    </ligand>
</feature>
<feature type="binding site" evidence="1">
    <location>
        <position position="583"/>
    </location>
    <ligand>
        <name>5-methyltetrahydropteroyltri-L-glutamate</name>
        <dbReference type="ChEBI" id="CHEBI:58207"/>
    </ligand>
</feature>
<feature type="binding site" evidence="1">
    <location>
        <position position="621"/>
    </location>
    <ligand>
        <name>L-homocysteine</name>
        <dbReference type="ChEBI" id="CHEBI:58199"/>
    </ligand>
</feature>
<feature type="binding site" evidence="1">
    <location>
        <position position="621"/>
    </location>
    <ligand>
        <name>L-methionine</name>
        <dbReference type="ChEBI" id="CHEBI:57844"/>
    </ligand>
</feature>
<feature type="binding site" evidence="1">
    <location>
        <position position="627"/>
    </location>
    <ligand>
        <name>5-methyltetrahydropteroyltri-L-glutamate</name>
        <dbReference type="ChEBI" id="CHEBI:58207"/>
    </ligand>
</feature>
<feature type="binding site" evidence="1">
    <location>
        <position position="663"/>
    </location>
    <ligand>
        <name>Zn(2+)</name>
        <dbReference type="ChEBI" id="CHEBI:29105"/>
        <note>catalytic</note>
    </ligand>
</feature>
<feature type="binding site" evidence="1">
    <location>
        <position position="665"/>
    </location>
    <ligand>
        <name>Zn(2+)</name>
        <dbReference type="ChEBI" id="CHEBI:29105"/>
        <note>catalytic</note>
    </ligand>
</feature>
<feature type="binding site" evidence="1">
    <location>
        <position position="687"/>
    </location>
    <ligand>
        <name>Zn(2+)</name>
        <dbReference type="ChEBI" id="CHEBI:29105"/>
        <note>catalytic</note>
    </ligand>
</feature>
<feature type="binding site" evidence="1">
    <location>
        <position position="748"/>
    </location>
    <ligand>
        <name>Zn(2+)</name>
        <dbReference type="ChEBI" id="CHEBI:29105"/>
        <note>catalytic</note>
    </ligand>
</feature>